<sequence>MQLHEQIANISVTFNDIPRSDHSMTPTELCYFDDFATTLVVDSVLNFTTHKMSKKRRYLYQDEYRTARTVMKTFREQRDWTNAIYGLLTLRSVSHFLSKLPPNKLFEFRDHIVRFLNMFILDSGYTIQECKRYSQEGHQGAKLVSTGVWSRGDKIERLSGVVCLLSSEDEDSILAQEGSDFSVMYSTRKRCSTLWLGPGAYINHDCRPTCEFVSHGSTAHIRVLRDMVPGDEITCFYGSEFFGPNNIDCECCTCEKNMNGAFSYLRGNENAEPIISEKKTKYELRSRS</sequence>
<evidence type="ECO:0000250" key="1">
    <source>
        <dbReference type="UniProtKB" id="Q3U8K7"/>
    </source>
</evidence>
<evidence type="ECO:0000255" key="2">
    <source>
        <dbReference type="PROSITE-ProRule" id="PRU00190"/>
    </source>
</evidence>
<evidence type="ECO:0000255" key="3">
    <source>
        <dbReference type="PROSITE-ProRule" id="PRU00903"/>
    </source>
</evidence>
<evidence type="ECO:0000269" key="4">
    <source>
    </source>
</evidence>
<evidence type="ECO:0000269" key="5">
    <source>
    </source>
</evidence>
<evidence type="ECO:0000269" key="6">
    <source>
    </source>
</evidence>
<evidence type="ECO:0000269" key="7">
    <source>
    </source>
</evidence>
<evidence type="ECO:0000305" key="8">
    <source>
    </source>
</evidence>
<feature type="chain" id="PRO_0000065217" description="Histone-lysine N-methyltransferase Suv4-20">
    <location>
        <begin position="1"/>
        <end position="288"/>
    </location>
</feature>
<feature type="domain" description="SET" evidence="2">
    <location>
        <begin position="128"/>
        <end position="238"/>
    </location>
</feature>
<name>SUV42_CAEEL</name>
<protein>
    <recommendedName>
        <fullName>Histone-lysine N-methyltransferase Suv4-20</fullName>
        <ecNumber evidence="3 5">2.1.1.362</ecNumber>
    </recommendedName>
    <alternativeName>
        <fullName>SET domain-containing protein 4</fullName>
    </alternativeName>
    <alternativeName>
        <fullName>Suppressor of variegation 4-20 homolog</fullName>
        <shortName>Su(var)4-20 homolog</shortName>
    </alternativeName>
</protein>
<keyword id="KW-0156">Chromatin regulator</keyword>
<keyword id="KW-0158">Chromosome</keyword>
<keyword id="KW-0489">Methyltransferase</keyword>
<keyword id="KW-0539">Nucleus</keyword>
<keyword id="KW-1185">Reference proteome</keyword>
<keyword id="KW-0678">Repressor</keyword>
<keyword id="KW-0949">S-adenosyl-L-methionine</keyword>
<keyword id="KW-0804">Transcription</keyword>
<keyword id="KW-0805">Transcription regulation</keyword>
<keyword id="KW-0808">Transferase</keyword>
<dbReference type="EC" id="2.1.1.362" evidence="3 5"/>
<dbReference type="EMBL" id="FO080708">
    <property type="protein sequence ID" value="CCD66031.1"/>
    <property type="molecule type" value="Genomic_DNA"/>
</dbReference>
<dbReference type="PIR" id="T15735">
    <property type="entry name" value="T15735"/>
</dbReference>
<dbReference type="RefSeq" id="NP_495272.1">
    <property type="nucleotide sequence ID" value="NM_062871.6"/>
</dbReference>
<dbReference type="SMR" id="Q09265"/>
<dbReference type="FunCoup" id="Q09265">
    <property type="interactions" value="968"/>
</dbReference>
<dbReference type="STRING" id="6239.C32D5.5.1"/>
<dbReference type="PaxDb" id="6239-C32D5.5"/>
<dbReference type="PeptideAtlas" id="Q09265"/>
<dbReference type="EnsemblMetazoa" id="C32D5.5.1">
    <property type="protein sequence ID" value="C32D5.5.1"/>
    <property type="gene ID" value="WBGene00016313"/>
</dbReference>
<dbReference type="GeneID" id="174045"/>
<dbReference type="KEGG" id="cel:CELE_C32D5.5"/>
<dbReference type="AGR" id="WB:WBGene00016313"/>
<dbReference type="CTD" id="174045"/>
<dbReference type="WormBase" id="C32D5.5">
    <property type="protein sequence ID" value="CE01845"/>
    <property type="gene ID" value="WBGene00016313"/>
    <property type="gene designation" value="set-4"/>
</dbReference>
<dbReference type="eggNOG" id="KOG2589">
    <property type="taxonomic scope" value="Eukaryota"/>
</dbReference>
<dbReference type="GeneTree" id="ENSGT00940000173121"/>
<dbReference type="HOGENOM" id="CLU_040002_1_1_1"/>
<dbReference type="InParanoid" id="Q09265"/>
<dbReference type="OMA" id="QGEEITC"/>
<dbReference type="OrthoDB" id="6627536at2759"/>
<dbReference type="PhylomeDB" id="Q09265"/>
<dbReference type="BRENDA" id="2.1.1.361">
    <property type="organism ID" value="1045"/>
</dbReference>
<dbReference type="PRO" id="PR:Q09265"/>
<dbReference type="Proteomes" id="UP000001940">
    <property type="component" value="Chromosome II"/>
</dbReference>
<dbReference type="Bgee" id="WBGene00016313">
    <property type="expression patterns" value="Expressed in germ line (C elegans) and 9 other cell types or tissues"/>
</dbReference>
<dbReference type="GO" id="GO:0005694">
    <property type="term" value="C:chromosome"/>
    <property type="evidence" value="ECO:0007669"/>
    <property type="project" value="UniProtKB-SubCell"/>
</dbReference>
<dbReference type="GO" id="GO:0005634">
    <property type="term" value="C:nucleus"/>
    <property type="evidence" value="ECO:0007669"/>
    <property type="project" value="UniProtKB-SubCell"/>
</dbReference>
<dbReference type="GO" id="GO:0140941">
    <property type="term" value="F:histone H4K20me methyltransferase activity"/>
    <property type="evidence" value="ECO:0000315"/>
    <property type="project" value="WormBase"/>
</dbReference>
<dbReference type="GO" id="GO:0008340">
    <property type="term" value="P:determination of adult lifespan"/>
    <property type="evidence" value="ECO:0000315"/>
    <property type="project" value="UniProtKB"/>
</dbReference>
<dbReference type="GO" id="GO:0032259">
    <property type="term" value="P:methylation"/>
    <property type="evidence" value="ECO:0007669"/>
    <property type="project" value="UniProtKB-KW"/>
</dbReference>
<dbReference type="CDD" id="cd10524">
    <property type="entry name" value="SET_Suv4-20-like"/>
    <property type="match status" value="1"/>
</dbReference>
<dbReference type="FunFam" id="1.10.10.1700:FF:000001">
    <property type="entry name" value="Histone-lysine N-methyltransferase"/>
    <property type="match status" value="1"/>
</dbReference>
<dbReference type="FunFam" id="2.170.270.10:FF:000006">
    <property type="entry name" value="Histone-lysine N-methyltransferase"/>
    <property type="match status" value="1"/>
</dbReference>
<dbReference type="Gene3D" id="1.10.10.1700">
    <property type="entry name" value="Histone-lysine N-methyltransferase"/>
    <property type="match status" value="1"/>
</dbReference>
<dbReference type="Gene3D" id="2.170.270.10">
    <property type="entry name" value="SET domain"/>
    <property type="match status" value="1"/>
</dbReference>
<dbReference type="InterPro" id="IPR041938">
    <property type="entry name" value="Hist-Lys_N-MTase_N"/>
</dbReference>
<dbReference type="InterPro" id="IPR001214">
    <property type="entry name" value="SET_dom"/>
</dbReference>
<dbReference type="InterPro" id="IPR046341">
    <property type="entry name" value="SET_dom_sf"/>
</dbReference>
<dbReference type="InterPro" id="IPR039977">
    <property type="entry name" value="Suv4-20/Set9"/>
</dbReference>
<dbReference type="InterPro" id="IPR025790">
    <property type="entry name" value="Suv4-20_animal"/>
</dbReference>
<dbReference type="PANTHER" id="PTHR12977:SF4">
    <property type="entry name" value="HISTONE-LYSINE N-METHYLTRANSFERASE KMT5B"/>
    <property type="match status" value="1"/>
</dbReference>
<dbReference type="PANTHER" id="PTHR12977">
    <property type="entry name" value="SUPPRESSOR OF VARIEGATION 4-20-RELATED"/>
    <property type="match status" value="1"/>
</dbReference>
<dbReference type="Pfam" id="PF00856">
    <property type="entry name" value="SET"/>
    <property type="match status" value="1"/>
</dbReference>
<dbReference type="SMART" id="SM00317">
    <property type="entry name" value="SET"/>
    <property type="match status" value="1"/>
</dbReference>
<dbReference type="SUPFAM" id="SSF82199">
    <property type="entry name" value="SET domain"/>
    <property type="match status" value="1"/>
</dbReference>
<dbReference type="PROSITE" id="PS51570">
    <property type="entry name" value="SAM_MT43_SUVAR420_2"/>
    <property type="match status" value="1"/>
</dbReference>
<dbReference type="PROSITE" id="PS50280">
    <property type="entry name" value="SET"/>
    <property type="match status" value="1"/>
</dbReference>
<proteinExistence type="evidence at protein level"/>
<accession>Q09265</accession>
<organism>
    <name type="scientific">Caenorhabditis elegans</name>
    <dbReference type="NCBI Taxonomy" id="6239"/>
    <lineage>
        <taxon>Eukaryota</taxon>
        <taxon>Metazoa</taxon>
        <taxon>Ecdysozoa</taxon>
        <taxon>Nematoda</taxon>
        <taxon>Chromadorea</taxon>
        <taxon>Rhabditida</taxon>
        <taxon>Rhabditina</taxon>
        <taxon>Rhabditomorpha</taxon>
        <taxon>Rhabditoidea</taxon>
        <taxon>Rhabditidae</taxon>
        <taxon>Peloderinae</taxon>
        <taxon>Caenorhabditis</taxon>
    </lineage>
</organism>
<reference key="1">
    <citation type="journal article" date="1998" name="Science">
        <title>Genome sequence of the nematode C. elegans: a platform for investigating biology.</title>
        <authorList>
            <consortium name="The C. elegans sequencing consortium"/>
        </authorList>
    </citation>
    <scope>NUCLEOTIDE SEQUENCE [LARGE SCALE GENOMIC DNA]</scope>
    <source>
        <strain>Bristol N2</strain>
    </source>
</reference>
<reference key="2">
    <citation type="journal article" date="2012" name="Mol. Cell. Biol.">
        <title>Caenorhabditis elegans dosage compensation regulates histone H4 chromatin state on X chromosomes.</title>
        <authorList>
            <person name="Wells M.B."/>
            <person name="Snyder M.J."/>
            <person name="Custer L.M."/>
            <person name="Csankovszki G."/>
        </authorList>
    </citation>
    <scope>FUNCTION</scope>
    <scope>DISRUPTION PHENOTYPE</scope>
</reference>
<reference key="3">
    <citation type="journal article" date="2012" name="PLoS Genet.">
        <title>H4K20me1 contributes to downregulation of X-linked genes for C. elegans dosage compensation.</title>
        <authorList>
            <person name="Vielle A."/>
            <person name="Lang J."/>
            <person name="Dong Y."/>
            <person name="Ercan S."/>
            <person name="Kotwaliwale C."/>
            <person name="Rechtsteiner A."/>
            <person name="Appert A."/>
            <person name="Chen Q.B."/>
            <person name="Dose A."/>
            <person name="Egelhofer T."/>
            <person name="Kimura H."/>
            <person name="Stempor P."/>
            <person name="Dernburg A."/>
            <person name="Lieb J.D."/>
            <person name="Strome S."/>
            <person name="Ahringer J."/>
        </authorList>
    </citation>
    <scope>FUNCTION</scope>
    <scope>CATALYTIC ACTIVITY</scope>
    <scope>SUBCELLULAR LOCATION</scope>
    <scope>DISRUPTION PHENOTYPE</scope>
</reference>
<reference key="4">
    <citation type="journal article" date="2013" name="Development">
        <title>A non-canonical role for the C. elegans dosage compensation complex in growth and metabolic regulation downstream of TOR complex 2.</title>
        <authorList>
            <person name="Webster C.M."/>
            <person name="Wu L."/>
            <person name="Douglas D."/>
            <person name="Soukas A.A."/>
        </authorList>
    </citation>
    <scope>FUNCTION</scope>
    <scope>DISRUPTION PHENOTYPE</scope>
</reference>
<reference key="5">
    <citation type="journal article" date="2015" name="PLoS Genet.">
        <title>Developmental dynamics of X-chromosome dosage compensation by the DCC and H4K20me1 in C. elegans.</title>
        <authorList>
            <person name="Kramer M."/>
            <person name="Kranz A.L."/>
            <person name="Su A."/>
            <person name="Winterkorn L.H."/>
            <person name="Albritton S.E."/>
            <person name="Ercan S."/>
        </authorList>
    </citation>
    <scope>FUNCTION</scope>
    <scope>DISRUPTION PHENOTYPE</scope>
</reference>
<comment type="function">
    <text evidence="1 4 5 6 7">Histone methyltransferase that specifically di- and trimethylates 'Lys-20' of histone H4 (H4K20me2/me3) (PubMed:22393255, PubMed:23028348). H4 'Lys-20' trimethylation represents a specific tag for epigenetic transcriptional repression (By similarity). Contributes to dosage compensation of X chromosome-relative to autosome-linked gene expression, possibly by converting H4K20me1 to H4K20m2/me3 on autosomes (PubMed:22393255, PubMed:23028348, PubMed:26641248). Involved in the regulation of growth and body fat metabolism downstream of the TOR complex 2 pathway (PubMed:23884442).</text>
</comment>
<comment type="catalytic activity">
    <reaction evidence="3 5">
        <text>N(6)-methyl-L-lysyl(20)-[histone H4] + S-adenosyl-L-methionine = N(6),N(6)-dimethyl-L-lysyl(20)-[histone H4] + S-adenosyl-L-homocysteine + H(+)</text>
        <dbReference type="Rhea" id="RHEA:60348"/>
        <dbReference type="Rhea" id="RHEA-COMP:15555"/>
        <dbReference type="Rhea" id="RHEA-COMP:15556"/>
        <dbReference type="ChEBI" id="CHEBI:15378"/>
        <dbReference type="ChEBI" id="CHEBI:57856"/>
        <dbReference type="ChEBI" id="CHEBI:59789"/>
        <dbReference type="ChEBI" id="CHEBI:61929"/>
        <dbReference type="ChEBI" id="CHEBI:61976"/>
        <dbReference type="EC" id="2.1.1.362"/>
    </reaction>
</comment>
<comment type="catalytic activity">
    <reaction evidence="3 5">
        <text>N(6),N(6)-dimethyl-L-lysyl(20)-[histone H4] + S-adenosyl-L-methionine = N(6),N(6),N(6)-trimethyl-L-lysyl(20)-[histone H4] + S-adenosyl-L-homocysteine + H(+)</text>
        <dbReference type="Rhea" id="RHEA:61992"/>
        <dbReference type="Rhea" id="RHEA-COMP:15556"/>
        <dbReference type="Rhea" id="RHEA-COMP:15998"/>
        <dbReference type="ChEBI" id="CHEBI:15378"/>
        <dbReference type="ChEBI" id="CHEBI:57856"/>
        <dbReference type="ChEBI" id="CHEBI:59789"/>
        <dbReference type="ChEBI" id="CHEBI:61961"/>
        <dbReference type="ChEBI" id="CHEBI:61976"/>
    </reaction>
</comment>
<comment type="subcellular location">
    <subcellularLocation>
        <location evidence="8">Nucleus</location>
    </subcellularLocation>
    <subcellularLocation>
        <location evidence="8">Chromosome</location>
    </subcellularLocation>
</comment>
<comment type="disruption phenotype">
    <text evidence="4 5 6 7">Mutant animals exhibit a lack of di- and trimethylation (H4K20me2/me3) and an increase of monomethylation of 'Lys-20' (H4K20me1) of histone H4 on autosomes, leading to equal H4K20me1 levels on autosomes relative to X chromosomes (PubMed:22393255, PubMed:23028348, PubMed:26641248). Decreased expression of autosomal genes (PubMed:26641248). Increase in 'Lys-16' acetylation of histone H4 (H4K16ac) on hermaphrodite X chromosomes (PubMed:22393255). Increase in binding of the RNA Pol II large subunit ama-1 on X chromosome gene promoters relative to autosomes (PubMed:26641248). In a dpy-21 mutant background, RNAi-mediated knockdown leads to embryonic lethality (PubMed:23028348). In the TOR complex 2 mutant background rict-1, suppresses the growth delay and elevated body fat index (PubMed:23884442).</text>
</comment>
<comment type="similarity">
    <text evidence="3">Belongs to the class V-like SAM-binding methyltransferase superfamily. Histone-lysine methyltransferase family. Suvar4-20 subfamily.</text>
</comment>
<gene>
    <name type="primary">set-4</name>
    <name type="synonym">tag-337</name>
    <name type="ORF">C32D5.5</name>
</gene>